<name>HIS6_AZOC5</name>
<comment type="function">
    <text evidence="1">IGPS catalyzes the conversion of PRFAR and glutamine to IGP, AICAR and glutamate. The HisF subunit catalyzes the cyclization activity that produces IGP and AICAR from PRFAR using the ammonia provided by the HisH subunit.</text>
</comment>
<comment type="catalytic activity">
    <reaction evidence="1">
        <text>5-[(5-phospho-1-deoxy-D-ribulos-1-ylimino)methylamino]-1-(5-phospho-beta-D-ribosyl)imidazole-4-carboxamide + L-glutamine = D-erythro-1-(imidazol-4-yl)glycerol 3-phosphate + 5-amino-1-(5-phospho-beta-D-ribosyl)imidazole-4-carboxamide + L-glutamate + H(+)</text>
        <dbReference type="Rhea" id="RHEA:24793"/>
        <dbReference type="ChEBI" id="CHEBI:15378"/>
        <dbReference type="ChEBI" id="CHEBI:29985"/>
        <dbReference type="ChEBI" id="CHEBI:58278"/>
        <dbReference type="ChEBI" id="CHEBI:58359"/>
        <dbReference type="ChEBI" id="CHEBI:58475"/>
        <dbReference type="ChEBI" id="CHEBI:58525"/>
        <dbReference type="EC" id="4.3.2.10"/>
    </reaction>
</comment>
<comment type="pathway">
    <text evidence="1">Amino-acid biosynthesis; L-histidine biosynthesis; L-histidine from 5-phospho-alpha-D-ribose 1-diphosphate: step 5/9.</text>
</comment>
<comment type="subunit">
    <text evidence="1">Heterodimer of HisH and HisF.</text>
</comment>
<comment type="subcellular location">
    <subcellularLocation>
        <location evidence="1">Cytoplasm</location>
    </subcellularLocation>
</comment>
<comment type="similarity">
    <text evidence="1">Belongs to the HisA/HisF family.</text>
</comment>
<evidence type="ECO:0000255" key="1">
    <source>
        <dbReference type="HAMAP-Rule" id="MF_01013"/>
    </source>
</evidence>
<organism>
    <name type="scientific">Azorhizobium caulinodans (strain ATCC 43989 / DSM 5975 / JCM 20966 / LMG 6465 / NBRC 14845 / NCIMB 13405 / ORS 571)</name>
    <dbReference type="NCBI Taxonomy" id="438753"/>
    <lineage>
        <taxon>Bacteria</taxon>
        <taxon>Pseudomonadati</taxon>
        <taxon>Pseudomonadota</taxon>
        <taxon>Alphaproteobacteria</taxon>
        <taxon>Hyphomicrobiales</taxon>
        <taxon>Xanthobacteraceae</taxon>
        <taxon>Azorhizobium</taxon>
    </lineage>
</organism>
<gene>
    <name evidence="1" type="primary">hisF</name>
    <name type="ordered locus">AZC_4498</name>
</gene>
<accession>A8HYT7</accession>
<dbReference type="EC" id="4.3.2.10" evidence="1"/>
<dbReference type="EMBL" id="AP009384">
    <property type="protein sequence ID" value="BAF90496.1"/>
    <property type="molecule type" value="Genomic_DNA"/>
</dbReference>
<dbReference type="RefSeq" id="WP_012173017.1">
    <property type="nucleotide sequence ID" value="NC_009937.1"/>
</dbReference>
<dbReference type="SMR" id="A8HYT7"/>
<dbReference type="STRING" id="438753.AZC_4498"/>
<dbReference type="KEGG" id="azc:AZC_4498"/>
<dbReference type="eggNOG" id="COG0107">
    <property type="taxonomic scope" value="Bacteria"/>
</dbReference>
<dbReference type="HOGENOM" id="CLU_048577_4_0_5"/>
<dbReference type="UniPathway" id="UPA00031">
    <property type="reaction ID" value="UER00010"/>
</dbReference>
<dbReference type="Proteomes" id="UP000000270">
    <property type="component" value="Chromosome"/>
</dbReference>
<dbReference type="GO" id="GO:0005737">
    <property type="term" value="C:cytoplasm"/>
    <property type="evidence" value="ECO:0007669"/>
    <property type="project" value="UniProtKB-SubCell"/>
</dbReference>
<dbReference type="GO" id="GO:0000107">
    <property type="term" value="F:imidazoleglycerol-phosphate synthase activity"/>
    <property type="evidence" value="ECO:0007669"/>
    <property type="project" value="UniProtKB-UniRule"/>
</dbReference>
<dbReference type="GO" id="GO:0016829">
    <property type="term" value="F:lyase activity"/>
    <property type="evidence" value="ECO:0007669"/>
    <property type="project" value="UniProtKB-KW"/>
</dbReference>
<dbReference type="GO" id="GO:0000105">
    <property type="term" value="P:L-histidine biosynthetic process"/>
    <property type="evidence" value="ECO:0007669"/>
    <property type="project" value="UniProtKB-UniRule"/>
</dbReference>
<dbReference type="CDD" id="cd04731">
    <property type="entry name" value="HisF"/>
    <property type="match status" value="1"/>
</dbReference>
<dbReference type="FunFam" id="3.20.20.70:FF:000006">
    <property type="entry name" value="Imidazole glycerol phosphate synthase subunit HisF"/>
    <property type="match status" value="1"/>
</dbReference>
<dbReference type="Gene3D" id="3.20.20.70">
    <property type="entry name" value="Aldolase class I"/>
    <property type="match status" value="1"/>
</dbReference>
<dbReference type="HAMAP" id="MF_01013">
    <property type="entry name" value="HisF"/>
    <property type="match status" value="1"/>
</dbReference>
<dbReference type="InterPro" id="IPR013785">
    <property type="entry name" value="Aldolase_TIM"/>
</dbReference>
<dbReference type="InterPro" id="IPR006062">
    <property type="entry name" value="His_biosynth"/>
</dbReference>
<dbReference type="InterPro" id="IPR004651">
    <property type="entry name" value="HisF"/>
</dbReference>
<dbReference type="InterPro" id="IPR050064">
    <property type="entry name" value="IGPS_HisA/HisF"/>
</dbReference>
<dbReference type="InterPro" id="IPR011060">
    <property type="entry name" value="RibuloseP-bd_barrel"/>
</dbReference>
<dbReference type="NCBIfam" id="TIGR00735">
    <property type="entry name" value="hisF"/>
    <property type="match status" value="1"/>
</dbReference>
<dbReference type="PANTHER" id="PTHR21235:SF2">
    <property type="entry name" value="IMIDAZOLE GLYCEROL PHOSPHATE SYNTHASE HISHF"/>
    <property type="match status" value="1"/>
</dbReference>
<dbReference type="PANTHER" id="PTHR21235">
    <property type="entry name" value="IMIDAZOLE GLYCEROL PHOSPHATE SYNTHASE SUBUNIT HISF/H IGP SYNTHASE SUBUNIT HISF/H"/>
    <property type="match status" value="1"/>
</dbReference>
<dbReference type="Pfam" id="PF00977">
    <property type="entry name" value="His_biosynth"/>
    <property type="match status" value="1"/>
</dbReference>
<dbReference type="SUPFAM" id="SSF51366">
    <property type="entry name" value="Ribulose-phoshate binding barrel"/>
    <property type="match status" value="1"/>
</dbReference>
<protein>
    <recommendedName>
        <fullName evidence="1">Imidazole glycerol phosphate synthase subunit HisF</fullName>
        <ecNumber evidence="1">4.3.2.10</ecNumber>
    </recommendedName>
    <alternativeName>
        <fullName evidence="1">IGP synthase cyclase subunit</fullName>
    </alternativeName>
    <alternativeName>
        <fullName evidence="1">IGP synthase subunit HisF</fullName>
    </alternativeName>
    <alternativeName>
        <fullName evidence="1">ImGP synthase subunit HisF</fullName>
        <shortName evidence="1">IGPS subunit HisF</shortName>
    </alternativeName>
</protein>
<feature type="chain" id="PRO_1000072921" description="Imidazole glycerol phosphate synthase subunit HisF">
    <location>
        <begin position="1"/>
        <end position="258"/>
    </location>
</feature>
<feature type="active site" evidence="1">
    <location>
        <position position="11"/>
    </location>
</feature>
<feature type="active site" evidence="1">
    <location>
        <position position="130"/>
    </location>
</feature>
<sequence>MLKVRVIPCLDVKDGRVVKGVQFVDLRDAGDPVESARAYDAAGADELTFLDITASHENRGTILDVVRRTAEQCFMPLTVGGGVRTVEDVRALLQAGADKVSINTAAVHRRAFVGEAAEKFGEQCIVVAIDAKQVSGPGETPRWEIFTHGGRKPTGLDVVEYAREVVDLGAGEILLTSMDRDGTGKGFDTALTRAVADAVQVPVIASGGVGTLDHMVDGIREGGATAVLAASIFHFGTFTVRQAKERLAAAGLPVRMDT</sequence>
<reference key="1">
    <citation type="submission" date="2007-04" db="EMBL/GenBank/DDBJ databases">
        <title>Complete genome sequence of the nitrogen-fixing bacterium Azorhizobium caulinodans ORS571.</title>
        <authorList>
            <person name="Lee K.B."/>
            <person name="Backer P.D."/>
            <person name="Aono T."/>
            <person name="Liu C.T."/>
            <person name="Suzuki S."/>
            <person name="Suzuki T."/>
            <person name="Kaneko T."/>
            <person name="Yamada M."/>
            <person name="Tabata S."/>
            <person name="Kupfer D.M."/>
            <person name="Najar F.Z."/>
            <person name="Wiley G.B."/>
            <person name="Roe B."/>
            <person name="Binnewies T."/>
            <person name="Ussery D."/>
            <person name="Vereecke D."/>
            <person name="Gevers D."/>
            <person name="Holsters M."/>
            <person name="Oyaizu H."/>
        </authorList>
    </citation>
    <scope>NUCLEOTIDE SEQUENCE [LARGE SCALE GENOMIC DNA]</scope>
    <source>
        <strain>ATCC 43989 / DSM 5975 / JCM 20966 / LMG 6465 / NBRC 14845 / NCIMB 13405 / ORS 571</strain>
    </source>
</reference>
<proteinExistence type="inferred from homology"/>
<keyword id="KW-0028">Amino-acid biosynthesis</keyword>
<keyword id="KW-0963">Cytoplasm</keyword>
<keyword id="KW-0368">Histidine biosynthesis</keyword>
<keyword id="KW-0456">Lyase</keyword>
<keyword id="KW-1185">Reference proteome</keyword>